<dbReference type="EC" id="2.1.1.199" evidence="1"/>
<dbReference type="EMBL" id="CP000237">
    <property type="protein sequence ID" value="ABD46126.1"/>
    <property type="molecule type" value="Genomic_DNA"/>
</dbReference>
<dbReference type="RefSeq" id="WP_011452291.1">
    <property type="nucleotide sequence ID" value="NC_007798.1"/>
</dbReference>
<dbReference type="SMR" id="Q2GCL1"/>
<dbReference type="STRING" id="222891.NSE_0921"/>
<dbReference type="KEGG" id="nse:NSE_0921"/>
<dbReference type="eggNOG" id="COG0275">
    <property type="taxonomic scope" value="Bacteria"/>
</dbReference>
<dbReference type="HOGENOM" id="CLU_038422_1_1_5"/>
<dbReference type="OrthoDB" id="9806637at2"/>
<dbReference type="Proteomes" id="UP000001942">
    <property type="component" value="Chromosome"/>
</dbReference>
<dbReference type="GO" id="GO:0005737">
    <property type="term" value="C:cytoplasm"/>
    <property type="evidence" value="ECO:0007669"/>
    <property type="project" value="UniProtKB-SubCell"/>
</dbReference>
<dbReference type="GO" id="GO:0071424">
    <property type="term" value="F:rRNA (cytosine-N4-)-methyltransferase activity"/>
    <property type="evidence" value="ECO:0007669"/>
    <property type="project" value="UniProtKB-UniRule"/>
</dbReference>
<dbReference type="GO" id="GO:0070475">
    <property type="term" value="P:rRNA base methylation"/>
    <property type="evidence" value="ECO:0007669"/>
    <property type="project" value="UniProtKB-UniRule"/>
</dbReference>
<dbReference type="CDD" id="cd02440">
    <property type="entry name" value="AdoMet_MTases"/>
    <property type="match status" value="1"/>
</dbReference>
<dbReference type="FunFam" id="1.10.150.170:FF:000003">
    <property type="entry name" value="Ribosomal RNA small subunit methyltransferase H"/>
    <property type="match status" value="1"/>
</dbReference>
<dbReference type="Gene3D" id="1.10.150.170">
    <property type="entry name" value="Putative methyltransferase TM0872, insert domain"/>
    <property type="match status" value="1"/>
</dbReference>
<dbReference type="Gene3D" id="3.40.50.150">
    <property type="entry name" value="Vaccinia Virus protein VP39"/>
    <property type="match status" value="1"/>
</dbReference>
<dbReference type="HAMAP" id="MF_01007">
    <property type="entry name" value="16SrRNA_methyltr_H"/>
    <property type="match status" value="1"/>
</dbReference>
<dbReference type="InterPro" id="IPR002903">
    <property type="entry name" value="RsmH"/>
</dbReference>
<dbReference type="InterPro" id="IPR023397">
    <property type="entry name" value="SAM-dep_MeTrfase_MraW_recog"/>
</dbReference>
<dbReference type="InterPro" id="IPR029063">
    <property type="entry name" value="SAM-dependent_MTases_sf"/>
</dbReference>
<dbReference type="NCBIfam" id="TIGR00006">
    <property type="entry name" value="16S rRNA (cytosine(1402)-N(4))-methyltransferase RsmH"/>
    <property type="match status" value="1"/>
</dbReference>
<dbReference type="PANTHER" id="PTHR11265:SF0">
    <property type="entry name" value="12S RRNA N4-METHYLCYTIDINE METHYLTRANSFERASE"/>
    <property type="match status" value="1"/>
</dbReference>
<dbReference type="PANTHER" id="PTHR11265">
    <property type="entry name" value="S-ADENOSYL-METHYLTRANSFERASE MRAW"/>
    <property type="match status" value="1"/>
</dbReference>
<dbReference type="Pfam" id="PF01795">
    <property type="entry name" value="Methyltransf_5"/>
    <property type="match status" value="1"/>
</dbReference>
<dbReference type="PIRSF" id="PIRSF004486">
    <property type="entry name" value="MraW"/>
    <property type="match status" value="1"/>
</dbReference>
<dbReference type="SUPFAM" id="SSF81799">
    <property type="entry name" value="Putative methyltransferase TM0872, insert domain"/>
    <property type="match status" value="1"/>
</dbReference>
<dbReference type="SUPFAM" id="SSF53335">
    <property type="entry name" value="S-adenosyl-L-methionine-dependent methyltransferases"/>
    <property type="match status" value="1"/>
</dbReference>
<evidence type="ECO:0000255" key="1">
    <source>
        <dbReference type="HAMAP-Rule" id="MF_01007"/>
    </source>
</evidence>
<reference key="1">
    <citation type="journal article" date="2006" name="PLoS Genet.">
        <title>Comparative genomics of emerging human ehrlichiosis agents.</title>
        <authorList>
            <person name="Dunning Hotopp J.C."/>
            <person name="Lin M."/>
            <person name="Madupu R."/>
            <person name="Crabtree J."/>
            <person name="Angiuoli S.V."/>
            <person name="Eisen J.A."/>
            <person name="Seshadri R."/>
            <person name="Ren Q."/>
            <person name="Wu M."/>
            <person name="Utterback T.R."/>
            <person name="Smith S."/>
            <person name="Lewis M."/>
            <person name="Khouri H."/>
            <person name="Zhang C."/>
            <person name="Niu H."/>
            <person name="Lin Q."/>
            <person name="Ohashi N."/>
            <person name="Zhi N."/>
            <person name="Nelson W.C."/>
            <person name="Brinkac L.M."/>
            <person name="Dodson R.J."/>
            <person name="Rosovitz M.J."/>
            <person name="Sundaram J.P."/>
            <person name="Daugherty S.C."/>
            <person name="Davidsen T."/>
            <person name="Durkin A.S."/>
            <person name="Gwinn M.L."/>
            <person name="Haft D.H."/>
            <person name="Selengut J.D."/>
            <person name="Sullivan S.A."/>
            <person name="Zafar N."/>
            <person name="Zhou L."/>
            <person name="Benahmed F."/>
            <person name="Forberger H."/>
            <person name="Halpin R."/>
            <person name="Mulligan S."/>
            <person name="Robinson J."/>
            <person name="White O."/>
            <person name="Rikihisa Y."/>
            <person name="Tettelin H."/>
        </authorList>
    </citation>
    <scope>NUCLEOTIDE SEQUENCE [LARGE SCALE GENOMIC DNA]</scope>
    <source>
        <strain>ATCC VR-367 / Miyayama</strain>
    </source>
</reference>
<gene>
    <name evidence="1" type="primary">rsmH</name>
    <name type="synonym">mraW</name>
    <name type="ordered locus">NSE_0921</name>
</gene>
<accession>Q2GCL1</accession>
<name>RSMH_NEOSM</name>
<sequence>MSVTGGSKDEILHKPVLLSEALKFLAPKNGGVYVDATFGAGGYTRAILSSVDCFVYAIDRDETVRRFFQVIENDFPKRTNFINGNFVDIGSLLGEVKVDGIVFDLGVSTMQLKVADRGFSFLHEGPLDMRMDRSTLLTAETVVNSYTEVKIASIIYQFGEERMSRKIAHAIVNARRKKRITTTSSLAEIVRSCFPKRYYKIDPATKTFQALRIFINDELGALECGLRTALTMLKVGSRAVVVSFHSLEDRIVKHLFRSVHGNGFNLLTKKIVVPSRDEVRENPSSRSARMRVIEKV</sequence>
<organism>
    <name type="scientific">Neorickettsia sennetsu (strain ATCC VR-367 / Miyayama)</name>
    <name type="common">Ehrlichia sennetsu</name>
    <dbReference type="NCBI Taxonomy" id="222891"/>
    <lineage>
        <taxon>Bacteria</taxon>
        <taxon>Pseudomonadati</taxon>
        <taxon>Pseudomonadota</taxon>
        <taxon>Alphaproteobacteria</taxon>
        <taxon>Rickettsiales</taxon>
        <taxon>Anaplasmataceae</taxon>
        <taxon>Neorickettsia</taxon>
    </lineage>
</organism>
<protein>
    <recommendedName>
        <fullName evidence="1">Ribosomal RNA small subunit methyltransferase H</fullName>
        <ecNumber evidence="1">2.1.1.199</ecNumber>
    </recommendedName>
    <alternativeName>
        <fullName evidence="1">16S rRNA m(4)C1402 methyltransferase</fullName>
    </alternativeName>
    <alternativeName>
        <fullName evidence="1">rRNA (cytosine-N(4)-)-methyltransferase RsmH</fullName>
    </alternativeName>
</protein>
<keyword id="KW-0963">Cytoplasm</keyword>
<keyword id="KW-0489">Methyltransferase</keyword>
<keyword id="KW-0698">rRNA processing</keyword>
<keyword id="KW-0949">S-adenosyl-L-methionine</keyword>
<keyword id="KW-0808">Transferase</keyword>
<feature type="chain" id="PRO_0000387007" description="Ribosomal RNA small subunit methyltransferase H">
    <location>
        <begin position="1"/>
        <end position="296"/>
    </location>
</feature>
<feature type="binding site" evidence="1">
    <location>
        <begin position="41"/>
        <end position="43"/>
    </location>
    <ligand>
        <name>S-adenosyl-L-methionine</name>
        <dbReference type="ChEBI" id="CHEBI:59789"/>
    </ligand>
</feature>
<feature type="binding site" evidence="1">
    <location>
        <position position="59"/>
    </location>
    <ligand>
        <name>S-adenosyl-L-methionine</name>
        <dbReference type="ChEBI" id="CHEBI:59789"/>
    </ligand>
</feature>
<feature type="binding site" evidence="1">
    <location>
        <position position="86"/>
    </location>
    <ligand>
        <name>S-adenosyl-L-methionine</name>
        <dbReference type="ChEBI" id="CHEBI:59789"/>
    </ligand>
</feature>
<feature type="binding site" evidence="1">
    <location>
        <position position="104"/>
    </location>
    <ligand>
        <name>S-adenosyl-L-methionine</name>
        <dbReference type="ChEBI" id="CHEBI:59789"/>
    </ligand>
</feature>
<feature type="binding site" evidence="1">
    <location>
        <position position="111"/>
    </location>
    <ligand>
        <name>S-adenosyl-L-methionine</name>
        <dbReference type="ChEBI" id="CHEBI:59789"/>
    </ligand>
</feature>
<comment type="function">
    <text evidence="1">Specifically methylates the N4 position of cytidine in position 1402 (C1402) of 16S rRNA.</text>
</comment>
<comment type="catalytic activity">
    <reaction evidence="1">
        <text>cytidine(1402) in 16S rRNA + S-adenosyl-L-methionine = N(4)-methylcytidine(1402) in 16S rRNA + S-adenosyl-L-homocysteine + H(+)</text>
        <dbReference type="Rhea" id="RHEA:42928"/>
        <dbReference type="Rhea" id="RHEA-COMP:10286"/>
        <dbReference type="Rhea" id="RHEA-COMP:10287"/>
        <dbReference type="ChEBI" id="CHEBI:15378"/>
        <dbReference type="ChEBI" id="CHEBI:57856"/>
        <dbReference type="ChEBI" id="CHEBI:59789"/>
        <dbReference type="ChEBI" id="CHEBI:74506"/>
        <dbReference type="ChEBI" id="CHEBI:82748"/>
        <dbReference type="EC" id="2.1.1.199"/>
    </reaction>
</comment>
<comment type="subcellular location">
    <subcellularLocation>
        <location evidence="1">Cytoplasm</location>
    </subcellularLocation>
</comment>
<comment type="similarity">
    <text evidence="1">Belongs to the methyltransferase superfamily. RsmH family.</text>
</comment>
<proteinExistence type="inferred from homology"/>